<keyword id="KW-0378">Hydrolase</keyword>
<keyword id="KW-0441">Lipid A biosynthesis</keyword>
<keyword id="KW-0444">Lipid biosynthesis</keyword>
<keyword id="KW-0443">Lipid metabolism</keyword>
<keyword id="KW-0479">Metal-binding</keyword>
<keyword id="KW-0862">Zinc</keyword>
<sequence>MIKQRTLKRIVQATGVGLHTGKKVTLTLRPAPANTGVIYRRTDLNPPVDFPADAKSVRDTMLCTCLVNEHDVRISTVEHLNAALAGLGIDNIVIEVNAPEIPIMDGSAAPFVYLLLDAGIDELNCAKKFVRIKETVRVEDGDKWAEFRPYNGFTLDFTIDFNHPAIDSSSQRYAMNFSADAFMRQISRARTFGFMRDIEYLQSRGLCLGGSFDCAIVVDDYRVLNEDGLRFEDEFVRHKMLDAIGDLFMCGHNIIGAFTAYKSGHALNNKLLQAVLAKQEAWEFVTFQDDAELPLAFKAPSTVLA</sequence>
<protein>
    <recommendedName>
        <fullName evidence="1">UDP-3-O-acyl-N-acetylglucosamine deacetylase</fullName>
        <shortName evidence="1">UDP-3-O-acyl-GlcNAc deacetylase</shortName>
        <ecNumber evidence="1">3.5.1.108</ecNumber>
    </recommendedName>
    <alternativeName>
        <fullName evidence="1">UDP-3-O-[R-3-hydroxymyristoyl]-N-acetylglucosamine deacetylase</fullName>
    </alternativeName>
</protein>
<feature type="chain" id="PRO_1000122815" description="UDP-3-O-acyl-N-acetylglucosamine deacetylase">
    <location>
        <begin position="1"/>
        <end position="305"/>
    </location>
</feature>
<feature type="active site" description="Proton donor" evidence="1">
    <location>
        <position position="265"/>
    </location>
</feature>
<feature type="binding site" evidence="1">
    <location>
        <position position="79"/>
    </location>
    <ligand>
        <name>Zn(2+)</name>
        <dbReference type="ChEBI" id="CHEBI:29105"/>
    </ligand>
</feature>
<feature type="binding site" evidence="1">
    <location>
        <position position="238"/>
    </location>
    <ligand>
        <name>Zn(2+)</name>
        <dbReference type="ChEBI" id="CHEBI:29105"/>
    </ligand>
</feature>
<feature type="binding site" evidence="1">
    <location>
        <position position="242"/>
    </location>
    <ligand>
        <name>Zn(2+)</name>
        <dbReference type="ChEBI" id="CHEBI:29105"/>
    </ligand>
</feature>
<reference key="1">
    <citation type="journal article" date="2008" name="Genome Res.">
        <title>Comparative genome analysis of Salmonella enteritidis PT4 and Salmonella gallinarum 287/91 provides insights into evolutionary and host adaptation pathways.</title>
        <authorList>
            <person name="Thomson N.R."/>
            <person name="Clayton D.J."/>
            <person name="Windhorst D."/>
            <person name="Vernikos G."/>
            <person name="Davidson S."/>
            <person name="Churcher C."/>
            <person name="Quail M.A."/>
            <person name="Stevens M."/>
            <person name="Jones M.A."/>
            <person name="Watson M."/>
            <person name="Barron A."/>
            <person name="Layton A."/>
            <person name="Pickard D."/>
            <person name="Kingsley R.A."/>
            <person name="Bignell A."/>
            <person name="Clark L."/>
            <person name="Harris B."/>
            <person name="Ormond D."/>
            <person name="Abdellah Z."/>
            <person name="Brooks K."/>
            <person name="Cherevach I."/>
            <person name="Chillingworth T."/>
            <person name="Woodward J."/>
            <person name="Norberczak H."/>
            <person name="Lord A."/>
            <person name="Arrowsmith C."/>
            <person name="Jagels K."/>
            <person name="Moule S."/>
            <person name="Mungall K."/>
            <person name="Saunders M."/>
            <person name="Whitehead S."/>
            <person name="Chabalgoity J.A."/>
            <person name="Maskell D."/>
            <person name="Humphreys T."/>
            <person name="Roberts M."/>
            <person name="Barrow P.A."/>
            <person name="Dougan G."/>
            <person name="Parkhill J."/>
        </authorList>
    </citation>
    <scope>NUCLEOTIDE SEQUENCE [LARGE SCALE GENOMIC DNA]</scope>
    <source>
        <strain>P125109</strain>
    </source>
</reference>
<accession>B5R2N0</accession>
<evidence type="ECO:0000255" key="1">
    <source>
        <dbReference type="HAMAP-Rule" id="MF_00388"/>
    </source>
</evidence>
<gene>
    <name evidence="1" type="primary">lpxC</name>
    <name type="ordered locus">SEN0135</name>
</gene>
<proteinExistence type="inferred from homology"/>
<comment type="function">
    <text evidence="1">Catalyzes the hydrolysis of UDP-3-O-myristoyl-N-acetylglucosamine to form UDP-3-O-myristoylglucosamine and acetate, the committed step in lipid A biosynthesis.</text>
</comment>
<comment type="catalytic activity">
    <reaction evidence="1">
        <text>a UDP-3-O-[(3R)-3-hydroxyacyl]-N-acetyl-alpha-D-glucosamine + H2O = a UDP-3-O-[(3R)-3-hydroxyacyl]-alpha-D-glucosamine + acetate</text>
        <dbReference type="Rhea" id="RHEA:67816"/>
        <dbReference type="ChEBI" id="CHEBI:15377"/>
        <dbReference type="ChEBI" id="CHEBI:30089"/>
        <dbReference type="ChEBI" id="CHEBI:137740"/>
        <dbReference type="ChEBI" id="CHEBI:173225"/>
        <dbReference type="EC" id="3.5.1.108"/>
    </reaction>
</comment>
<comment type="cofactor">
    <cofactor evidence="1">
        <name>Zn(2+)</name>
        <dbReference type="ChEBI" id="CHEBI:29105"/>
    </cofactor>
</comment>
<comment type="pathway">
    <text evidence="1">Glycolipid biosynthesis; lipid IV(A) biosynthesis; lipid IV(A) from (3R)-3-hydroxytetradecanoyl-[acyl-carrier-protein] and UDP-N-acetyl-alpha-D-glucosamine: step 2/6.</text>
</comment>
<comment type="similarity">
    <text evidence="1">Belongs to the LpxC family.</text>
</comment>
<organism>
    <name type="scientific">Salmonella enteritidis PT4 (strain P125109)</name>
    <dbReference type="NCBI Taxonomy" id="550537"/>
    <lineage>
        <taxon>Bacteria</taxon>
        <taxon>Pseudomonadati</taxon>
        <taxon>Pseudomonadota</taxon>
        <taxon>Gammaproteobacteria</taxon>
        <taxon>Enterobacterales</taxon>
        <taxon>Enterobacteriaceae</taxon>
        <taxon>Salmonella</taxon>
    </lineage>
</organism>
<name>LPXC_SALEP</name>
<dbReference type="EC" id="3.5.1.108" evidence="1"/>
<dbReference type="EMBL" id="AM933172">
    <property type="protein sequence ID" value="CAR31724.1"/>
    <property type="molecule type" value="Genomic_DNA"/>
</dbReference>
<dbReference type="RefSeq" id="WP_000595487.1">
    <property type="nucleotide sequence ID" value="NC_011294.1"/>
</dbReference>
<dbReference type="SMR" id="B5R2N0"/>
<dbReference type="KEGG" id="set:SEN0135"/>
<dbReference type="HOGENOM" id="CLU_046528_1_0_6"/>
<dbReference type="UniPathway" id="UPA00359">
    <property type="reaction ID" value="UER00478"/>
</dbReference>
<dbReference type="Proteomes" id="UP000000613">
    <property type="component" value="Chromosome"/>
</dbReference>
<dbReference type="GO" id="GO:0016020">
    <property type="term" value="C:membrane"/>
    <property type="evidence" value="ECO:0007669"/>
    <property type="project" value="GOC"/>
</dbReference>
<dbReference type="GO" id="GO:0046872">
    <property type="term" value="F:metal ion binding"/>
    <property type="evidence" value="ECO:0007669"/>
    <property type="project" value="UniProtKB-KW"/>
</dbReference>
<dbReference type="GO" id="GO:0103117">
    <property type="term" value="F:UDP-3-O-acyl-N-acetylglucosamine deacetylase activity"/>
    <property type="evidence" value="ECO:0007669"/>
    <property type="project" value="UniProtKB-UniRule"/>
</dbReference>
<dbReference type="GO" id="GO:0009245">
    <property type="term" value="P:lipid A biosynthetic process"/>
    <property type="evidence" value="ECO:0007669"/>
    <property type="project" value="UniProtKB-UniRule"/>
</dbReference>
<dbReference type="FunFam" id="3.30.1700.10:FF:000001">
    <property type="entry name" value="UDP-3-O-acyl-N-acetylglucosamine deacetylase"/>
    <property type="match status" value="1"/>
</dbReference>
<dbReference type="FunFam" id="3.30.230.20:FF:000001">
    <property type="entry name" value="UDP-3-O-acyl-N-acetylglucosamine deacetylase"/>
    <property type="match status" value="1"/>
</dbReference>
<dbReference type="Gene3D" id="3.30.230.20">
    <property type="entry name" value="lpxc deacetylase, domain 1"/>
    <property type="match status" value="1"/>
</dbReference>
<dbReference type="Gene3D" id="3.30.1700.10">
    <property type="entry name" value="lpxc deacetylase, domain 2"/>
    <property type="match status" value="1"/>
</dbReference>
<dbReference type="HAMAP" id="MF_00388">
    <property type="entry name" value="LpxC"/>
    <property type="match status" value="1"/>
</dbReference>
<dbReference type="InterPro" id="IPR020568">
    <property type="entry name" value="Ribosomal_Su5_D2-typ_SF"/>
</dbReference>
<dbReference type="InterPro" id="IPR004463">
    <property type="entry name" value="UDP-acyl_GlcNac_deAcase"/>
</dbReference>
<dbReference type="InterPro" id="IPR011334">
    <property type="entry name" value="UDP-acyl_GlcNac_deAcase_C"/>
</dbReference>
<dbReference type="InterPro" id="IPR015870">
    <property type="entry name" value="UDP-acyl_N-AcGlcN_deAcase_N"/>
</dbReference>
<dbReference type="NCBIfam" id="TIGR00325">
    <property type="entry name" value="lpxC"/>
    <property type="match status" value="1"/>
</dbReference>
<dbReference type="PANTHER" id="PTHR33694">
    <property type="entry name" value="UDP-3-O-ACYL-N-ACETYLGLUCOSAMINE DEACETYLASE 1, MITOCHONDRIAL-RELATED"/>
    <property type="match status" value="1"/>
</dbReference>
<dbReference type="PANTHER" id="PTHR33694:SF1">
    <property type="entry name" value="UDP-3-O-ACYL-N-ACETYLGLUCOSAMINE DEACETYLASE 1, MITOCHONDRIAL-RELATED"/>
    <property type="match status" value="1"/>
</dbReference>
<dbReference type="Pfam" id="PF03331">
    <property type="entry name" value="LpxC"/>
    <property type="match status" value="1"/>
</dbReference>
<dbReference type="SUPFAM" id="SSF54211">
    <property type="entry name" value="Ribosomal protein S5 domain 2-like"/>
    <property type="match status" value="2"/>
</dbReference>